<protein>
    <recommendedName>
        <fullName evidence="1">Leucine--tRNA ligase</fullName>
        <ecNumber evidence="1">6.1.1.4</ecNumber>
    </recommendedName>
    <alternativeName>
        <fullName evidence="1">Leucyl-tRNA synthetase</fullName>
        <shortName evidence="1">LeuRS</shortName>
    </alternativeName>
</protein>
<keyword id="KW-0030">Aminoacyl-tRNA synthetase</keyword>
<keyword id="KW-0067">ATP-binding</keyword>
<keyword id="KW-0963">Cytoplasm</keyword>
<keyword id="KW-0436">Ligase</keyword>
<keyword id="KW-0547">Nucleotide-binding</keyword>
<keyword id="KW-0648">Protein biosynthesis</keyword>
<dbReference type="EC" id="6.1.1.4" evidence="1"/>
<dbReference type="EMBL" id="CP000720">
    <property type="protein sequence ID" value="ABS47710.1"/>
    <property type="molecule type" value="Genomic_DNA"/>
</dbReference>
<dbReference type="RefSeq" id="WP_002210333.1">
    <property type="nucleotide sequence ID" value="NC_009708.1"/>
</dbReference>
<dbReference type="SMR" id="A7FKW0"/>
<dbReference type="GeneID" id="57976085"/>
<dbReference type="KEGG" id="ypi:YpsIP31758_2926"/>
<dbReference type="HOGENOM" id="CLU_004427_0_0_6"/>
<dbReference type="Proteomes" id="UP000002412">
    <property type="component" value="Chromosome"/>
</dbReference>
<dbReference type="GO" id="GO:0005829">
    <property type="term" value="C:cytosol"/>
    <property type="evidence" value="ECO:0007669"/>
    <property type="project" value="TreeGrafter"/>
</dbReference>
<dbReference type="GO" id="GO:0002161">
    <property type="term" value="F:aminoacyl-tRNA deacylase activity"/>
    <property type="evidence" value="ECO:0007669"/>
    <property type="project" value="InterPro"/>
</dbReference>
<dbReference type="GO" id="GO:0005524">
    <property type="term" value="F:ATP binding"/>
    <property type="evidence" value="ECO:0007669"/>
    <property type="project" value="UniProtKB-UniRule"/>
</dbReference>
<dbReference type="GO" id="GO:0004823">
    <property type="term" value="F:leucine-tRNA ligase activity"/>
    <property type="evidence" value="ECO:0007669"/>
    <property type="project" value="UniProtKB-UniRule"/>
</dbReference>
<dbReference type="GO" id="GO:0006429">
    <property type="term" value="P:leucyl-tRNA aminoacylation"/>
    <property type="evidence" value="ECO:0007669"/>
    <property type="project" value="UniProtKB-UniRule"/>
</dbReference>
<dbReference type="CDD" id="cd07958">
    <property type="entry name" value="Anticodon_Ia_Leu_BEm"/>
    <property type="match status" value="1"/>
</dbReference>
<dbReference type="CDD" id="cd00812">
    <property type="entry name" value="LeuRS_core"/>
    <property type="match status" value="1"/>
</dbReference>
<dbReference type="FunFam" id="1.10.730.10:FF:000002">
    <property type="entry name" value="Leucine--tRNA ligase"/>
    <property type="match status" value="2"/>
</dbReference>
<dbReference type="FunFam" id="2.20.28.290:FF:000001">
    <property type="entry name" value="Leucine--tRNA ligase"/>
    <property type="match status" value="1"/>
</dbReference>
<dbReference type="FunFam" id="3.10.20.590:FF:000001">
    <property type="entry name" value="Leucine--tRNA ligase"/>
    <property type="match status" value="1"/>
</dbReference>
<dbReference type="FunFam" id="3.40.50.620:FF:000003">
    <property type="entry name" value="Leucine--tRNA ligase"/>
    <property type="match status" value="1"/>
</dbReference>
<dbReference type="FunFam" id="3.40.50.620:FF:000124">
    <property type="entry name" value="Leucine--tRNA ligase"/>
    <property type="match status" value="1"/>
</dbReference>
<dbReference type="FunFam" id="3.90.740.10:FF:000012">
    <property type="entry name" value="Leucine--tRNA ligase"/>
    <property type="match status" value="1"/>
</dbReference>
<dbReference type="Gene3D" id="2.20.28.290">
    <property type="match status" value="1"/>
</dbReference>
<dbReference type="Gene3D" id="3.10.20.590">
    <property type="match status" value="1"/>
</dbReference>
<dbReference type="Gene3D" id="3.40.50.620">
    <property type="entry name" value="HUPs"/>
    <property type="match status" value="2"/>
</dbReference>
<dbReference type="Gene3D" id="1.10.730.10">
    <property type="entry name" value="Isoleucyl-tRNA Synthetase, Domain 1"/>
    <property type="match status" value="1"/>
</dbReference>
<dbReference type="Gene3D" id="3.90.740.10">
    <property type="entry name" value="Valyl/Leucyl/Isoleucyl-tRNA synthetase, editing domain"/>
    <property type="match status" value="1"/>
</dbReference>
<dbReference type="HAMAP" id="MF_00049_B">
    <property type="entry name" value="Leu_tRNA_synth_B"/>
    <property type="match status" value="1"/>
</dbReference>
<dbReference type="InterPro" id="IPR001412">
    <property type="entry name" value="aa-tRNA-synth_I_CS"/>
</dbReference>
<dbReference type="InterPro" id="IPR002300">
    <property type="entry name" value="aa-tRNA-synth_Ia"/>
</dbReference>
<dbReference type="InterPro" id="IPR002302">
    <property type="entry name" value="Leu-tRNA-ligase"/>
</dbReference>
<dbReference type="InterPro" id="IPR025709">
    <property type="entry name" value="Leu_tRNA-synth_edit"/>
</dbReference>
<dbReference type="InterPro" id="IPR013155">
    <property type="entry name" value="M/V/L/I-tRNA-synth_anticd-bd"/>
</dbReference>
<dbReference type="InterPro" id="IPR015413">
    <property type="entry name" value="Methionyl/Leucyl_tRNA_Synth"/>
</dbReference>
<dbReference type="InterPro" id="IPR014729">
    <property type="entry name" value="Rossmann-like_a/b/a_fold"/>
</dbReference>
<dbReference type="InterPro" id="IPR009080">
    <property type="entry name" value="tRNAsynth_Ia_anticodon-bd"/>
</dbReference>
<dbReference type="InterPro" id="IPR009008">
    <property type="entry name" value="Val/Leu/Ile-tRNA-synth_edit"/>
</dbReference>
<dbReference type="NCBIfam" id="TIGR00396">
    <property type="entry name" value="leuS_bact"/>
    <property type="match status" value="1"/>
</dbReference>
<dbReference type="PANTHER" id="PTHR43740:SF2">
    <property type="entry name" value="LEUCINE--TRNA LIGASE, MITOCHONDRIAL"/>
    <property type="match status" value="1"/>
</dbReference>
<dbReference type="PANTHER" id="PTHR43740">
    <property type="entry name" value="LEUCYL-TRNA SYNTHETASE"/>
    <property type="match status" value="1"/>
</dbReference>
<dbReference type="Pfam" id="PF08264">
    <property type="entry name" value="Anticodon_1"/>
    <property type="match status" value="1"/>
</dbReference>
<dbReference type="Pfam" id="PF00133">
    <property type="entry name" value="tRNA-synt_1"/>
    <property type="match status" value="2"/>
</dbReference>
<dbReference type="Pfam" id="PF13603">
    <property type="entry name" value="tRNA-synt_1_2"/>
    <property type="match status" value="1"/>
</dbReference>
<dbReference type="Pfam" id="PF09334">
    <property type="entry name" value="tRNA-synt_1g"/>
    <property type="match status" value="1"/>
</dbReference>
<dbReference type="PRINTS" id="PR00985">
    <property type="entry name" value="TRNASYNTHLEU"/>
</dbReference>
<dbReference type="SUPFAM" id="SSF47323">
    <property type="entry name" value="Anticodon-binding domain of a subclass of class I aminoacyl-tRNA synthetases"/>
    <property type="match status" value="1"/>
</dbReference>
<dbReference type="SUPFAM" id="SSF52374">
    <property type="entry name" value="Nucleotidylyl transferase"/>
    <property type="match status" value="1"/>
</dbReference>
<dbReference type="SUPFAM" id="SSF50677">
    <property type="entry name" value="ValRS/IleRS/LeuRS editing domain"/>
    <property type="match status" value="1"/>
</dbReference>
<dbReference type="PROSITE" id="PS00178">
    <property type="entry name" value="AA_TRNA_LIGASE_I"/>
    <property type="match status" value="1"/>
</dbReference>
<evidence type="ECO:0000255" key="1">
    <source>
        <dbReference type="HAMAP-Rule" id="MF_00049"/>
    </source>
</evidence>
<name>SYL_YERP3</name>
<sequence length="860" mass="97051">MQEQYRPEDIETQVQLHWQEKQTFKVTEDASKEKYYCLSMLPYPSGRLHMGHVRNYTIGDVISRYQRMLGKNVLQPIGWDAFGLPAEGAAVKNNTAPAPWTYDNIEYMKNQLKLLGFGYDWDREIATCKPDYYRWEQWFFTKLYEKGMVYKKTSAVNWCPHDLTVLANEQVIDGCCWRCDTKVERKEIPQWFIKITDYAEQLLNDLDTLESWPEQVKTMQRNWIGRSEGVDIVFDVVDSEEKLSVYTTRPDTFMGVTYVAVAAGHPLSLQAAATNPALADFVAECRNTKVAEAEMATMEKKGMATGLYAIHPLTGEKLPIWAANFVLMDYGTGAVMAVPGHDARDWEFATKYNLPIKPVILAADGSEPDLSQEAMTEKGTLFNSGEFDGLNHEDGFNAIADKLVALGVGQRKVNYRLRDWGVSRQRYWGAPIPMVTLEDGTVVPTPEDQLPVILPEDVVMDGISSPIKADPEWAKTTVNGIPGLRETDTFDTFMESSWYYARYTCPQYDDGMLDPAAANYWLPVDQYVGGIEHAIMHLMYFRFFHKLLRDAGLVDSDEPAKRLLCQGMVLADAFYYTGNNGERIWVSPVDAIVERDDKGRIVKAVDAEGHELVYAGMSKMSKSKNNGIDPQVMVEKYGADTVRLFMMFASPAEMTLEWQESGVEGANRFLKRVWRLAFDHTAKGAVKPLDIASLTEEQKSLRRDLHKTIAKVTDDVGRRQTFNTAIAAVMELMNKLGRAPQETEQDRALMQEALLAVVRMLYPFTPHVCFSLWQALGGEGDIDTAPWPIADEQAMVEDSKLVVVQVNGKVRGRITVPADATEQQVRERAGQEHLVAKYLDGVTVRKVIYVPGKLLNLVVG</sequence>
<gene>
    <name evidence="1" type="primary">leuS</name>
    <name type="ordered locus">YpsIP31758_2926</name>
</gene>
<organism>
    <name type="scientific">Yersinia pseudotuberculosis serotype O:1b (strain IP 31758)</name>
    <dbReference type="NCBI Taxonomy" id="349747"/>
    <lineage>
        <taxon>Bacteria</taxon>
        <taxon>Pseudomonadati</taxon>
        <taxon>Pseudomonadota</taxon>
        <taxon>Gammaproteobacteria</taxon>
        <taxon>Enterobacterales</taxon>
        <taxon>Yersiniaceae</taxon>
        <taxon>Yersinia</taxon>
    </lineage>
</organism>
<feature type="chain" id="PRO_1000057349" description="Leucine--tRNA ligase">
    <location>
        <begin position="1"/>
        <end position="860"/>
    </location>
</feature>
<feature type="short sequence motif" description="'HIGH' region">
    <location>
        <begin position="42"/>
        <end position="52"/>
    </location>
</feature>
<feature type="short sequence motif" description="'KMSKS' region">
    <location>
        <begin position="619"/>
        <end position="623"/>
    </location>
</feature>
<feature type="binding site" evidence="1">
    <location>
        <position position="622"/>
    </location>
    <ligand>
        <name>ATP</name>
        <dbReference type="ChEBI" id="CHEBI:30616"/>
    </ligand>
</feature>
<comment type="catalytic activity">
    <reaction evidence="1">
        <text>tRNA(Leu) + L-leucine + ATP = L-leucyl-tRNA(Leu) + AMP + diphosphate</text>
        <dbReference type="Rhea" id="RHEA:11688"/>
        <dbReference type="Rhea" id="RHEA-COMP:9613"/>
        <dbReference type="Rhea" id="RHEA-COMP:9622"/>
        <dbReference type="ChEBI" id="CHEBI:30616"/>
        <dbReference type="ChEBI" id="CHEBI:33019"/>
        <dbReference type="ChEBI" id="CHEBI:57427"/>
        <dbReference type="ChEBI" id="CHEBI:78442"/>
        <dbReference type="ChEBI" id="CHEBI:78494"/>
        <dbReference type="ChEBI" id="CHEBI:456215"/>
        <dbReference type="EC" id="6.1.1.4"/>
    </reaction>
</comment>
<comment type="subcellular location">
    <subcellularLocation>
        <location evidence="1">Cytoplasm</location>
    </subcellularLocation>
</comment>
<comment type="similarity">
    <text evidence="1">Belongs to the class-I aminoacyl-tRNA synthetase family.</text>
</comment>
<reference key="1">
    <citation type="journal article" date="2007" name="PLoS Genet.">
        <title>The complete genome sequence of Yersinia pseudotuberculosis IP31758, the causative agent of Far East scarlet-like fever.</title>
        <authorList>
            <person name="Eppinger M."/>
            <person name="Rosovitz M.J."/>
            <person name="Fricke W.F."/>
            <person name="Rasko D.A."/>
            <person name="Kokorina G."/>
            <person name="Fayolle C."/>
            <person name="Lindler L.E."/>
            <person name="Carniel E."/>
            <person name="Ravel J."/>
        </authorList>
    </citation>
    <scope>NUCLEOTIDE SEQUENCE [LARGE SCALE GENOMIC DNA]</scope>
    <source>
        <strain>IP 31758</strain>
    </source>
</reference>
<proteinExistence type="inferred from homology"/>
<accession>A7FKW0</accession>